<comment type="function">
    <text evidence="1">Catalyzes the formation of the alpha-1,6-glucosidic linkages in glycogen by scission of a 1,4-alpha-linked oligosaccharide from growing alpha-1,4-glucan chains and the subsequent attachment of the oligosaccharide to the alpha-1,6 position.</text>
</comment>
<comment type="catalytic activity">
    <reaction evidence="1">
        <text>Transfers a segment of a (1-&gt;4)-alpha-D-glucan chain to a primary hydroxy group in a similar glucan chain.</text>
        <dbReference type="EC" id="2.4.1.18"/>
    </reaction>
</comment>
<comment type="pathway">
    <text evidence="1">Glycan biosynthesis; glycogen biosynthesis.</text>
</comment>
<comment type="subunit">
    <text evidence="1">Monomer.</text>
</comment>
<comment type="similarity">
    <text evidence="1">Belongs to the glycosyl hydrolase 13 family. GlgB subfamily.</text>
</comment>
<reference key="1">
    <citation type="journal article" date="2007" name="Genome Res.">
        <title>Genome characteristics of facultatively symbiotic Frankia sp. strains reflect host range and host plant biogeography.</title>
        <authorList>
            <person name="Normand P."/>
            <person name="Lapierre P."/>
            <person name="Tisa L.S."/>
            <person name="Gogarten J.P."/>
            <person name="Alloisio N."/>
            <person name="Bagnarol E."/>
            <person name="Bassi C.A."/>
            <person name="Berry A.M."/>
            <person name="Bickhart D.M."/>
            <person name="Choisne N."/>
            <person name="Couloux A."/>
            <person name="Cournoyer B."/>
            <person name="Cruveiller S."/>
            <person name="Daubin V."/>
            <person name="Demange N."/>
            <person name="Francino M.P."/>
            <person name="Goltsman E."/>
            <person name="Huang Y."/>
            <person name="Kopp O.R."/>
            <person name="Labarre L."/>
            <person name="Lapidus A."/>
            <person name="Lavire C."/>
            <person name="Marechal J."/>
            <person name="Martinez M."/>
            <person name="Mastronunzio J.E."/>
            <person name="Mullin B.C."/>
            <person name="Niemann J."/>
            <person name="Pujic P."/>
            <person name="Rawnsley T."/>
            <person name="Rouy Z."/>
            <person name="Schenowitz C."/>
            <person name="Sellstedt A."/>
            <person name="Tavares F."/>
            <person name="Tomkins J.P."/>
            <person name="Vallenet D."/>
            <person name="Valverde C."/>
            <person name="Wall L.G."/>
            <person name="Wang Y."/>
            <person name="Medigue C."/>
            <person name="Benson D.R."/>
        </authorList>
    </citation>
    <scope>NUCLEOTIDE SEQUENCE [LARGE SCALE GENOMIC DNA]</scope>
    <source>
        <strain>DSM 45818 / CECT 9043 / HFP020203 / CcI3</strain>
    </source>
</reference>
<keyword id="KW-0119">Carbohydrate metabolism</keyword>
<keyword id="KW-0320">Glycogen biosynthesis</keyword>
<keyword id="KW-0321">Glycogen metabolism</keyword>
<keyword id="KW-0328">Glycosyltransferase</keyword>
<keyword id="KW-1185">Reference proteome</keyword>
<keyword id="KW-0808">Transferase</keyword>
<gene>
    <name evidence="1" type="primary">glgB</name>
    <name type="ordered locus">Francci3_3681</name>
</gene>
<dbReference type="EC" id="2.4.1.18" evidence="1"/>
<dbReference type="EMBL" id="CP000249">
    <property type="protein sequence ID" value="ABD13033.1"/>
    <property type="molecule type" value="Genomic_DNA"/>
</dbReference>
<dbReference type="RefSeq" id="WP_011438057.1">
    <property type="nucleotide sequence ID" value="NZ_JENI01000016.1"/>
</dbReference>
<dbReference type="SMR" id="Q2J6Q9"/>
<dbReference type="STRING" id="106370.Francci3_3681"/>
<dbReference type="CAZy" id="CBM48">
    <property type="family name" value="Carbohydrate-Binding Module Family 48"/>
</dbReference>
<dbReference type="CAZy" id="GH13">
    <property type="family name" value="Glycoside Hydrolase Family 13"/>
</dbReference>
<dbReference type="KEGG" id="fra:Francci3_3681"/>
<dbReference type="eggNOG" id="COG0296">
    <property type="taxonomic scope" value="Bacteria"/>
</dbReference>
<dbReference type="HOGENOM" id="CLU_004245_3_2_11"/>
<dbReference type="OrthoDB" id="9800174at2"/>
<dbReference type="PhylomeDB" id="Q2J6Q9"/>
<dbReference type="BRENDA" id="2.4.1.18">
    <property type="organism ID" value="15235"/>
</dbReference>
<dbReference type="UniPathway" id="UPA00164"/>
<dbReference type="Proteomes" id="UP000001937">
    <property type="component" value="Chromosome"/>
</dbReference>
<dbReference type="GO" id="GO:0005829">
    <property type="term" value="C:cytosol"/>
    <property type="evidence" value="ECO:0007669"/>
    <property type="project" value="TreeGrafter"/>
</dbReference>
<dbReference type="GO" id="GO:0003844">
    <property type="term" value="F:1,4-alpha-glucan branching enzyme activity"/>
    <property type="evidence" value="ECO:0007669"/>
    <property type="project" value="UniProtKB-UniRule"/>
</dbReference>
<dbReference type="GO" id="GO:0043169">
    <property type="term" value="F:cation binding"/>
    <property type="evidence" value="ECO:0007669"/>
    <property type="project" value="InterPro"/>
</dbReference>
<dbReference type="GO" id="GO:0004553">
    <property type="term" value="F:hydrolase activity, hydrolyzing O-glycosyl compounds"/>
    <property type="evidence" value="ECO:0007669"/>
    <property type="project" value="InterPro"/>
</dbReference>
<dbReference type="GO" id="GO:0005978">
    <property type="term" value="P:glycogen biosynthetic process"/>
    <property type="evidence" value="ECO:0007669"/>
    <property type="project" value="UniProtKB-UniRule"/>
</dbReference>
<dbReference type="CDD" id="cd11322">
    <property type="entry name" value="AmyAc_Glg_BE"/>
    <property type="match status" value="1"/>
</dbReference>
<dbReference type="CDD" id="cd02855">
    <property type="entry name" value="E_set_GBE_prok_N"/>
    <property type="match status" value="1"/>
</dbReference>
<dbReference type="FunFam" id="2.60.40.10:FF:000169">
    <property type="entry name" value="1,4-alpha-glucan branching enzyme GlgB"/>
    <property type="match status" value="1"/>
</dbReference>
<dbReference type="FunFam" id="2.60.40.1180:FF:000002">
    <property type="entry name" value="1,4-alpha-glucan branching enzyme GlgB"/>
    <property type="match status" value="1"/>
</dbReference>
<dbReference type="FunFam" id="3.20.20.80:FF:000003">
    <property type="entry name" value="1,4-alpha-glucan branching enzyme GlgB"/>
    <property type="match status" value="1"/>
</dbReference>
<dbReference type="Gene3D" id="3.20.20.80">
    <property type="entry name" value="Glycosidases"/>
    <property type="match status" value="1"/>
</dbReference>
<dbReference type="Gene3D" id="2.60.40.1180">
    <property type="entry name" value="Golgi alpha-mannosidase II"/>
    <property type="match status" value="1"/>
</dbReference>
<dbReference type="Gene3D" id="2.60.40.10">
    <property type="entry name" value="Immunoglobulins"/>
    <property type="match status" value="2"/>
</dbReference>
<dbReference type="HAMAP" id="MF_00685">
    <property type="entry name" value="GlgB"/>
    <property type="match status" value="1"/>
</dbReference>
<dbReference type="InterPro" id="IPR006048">
    <property type="entry name" value="A-amylase/branching_C"/>
</dbReference>
<dbReference type="InterPro" id="IPR037439">
    <property type="entry name" value="Branching_enzy"/>
</dbReference>
<dbReference type="InterPro" id="IPR006407">
    <property type="entry name" value="GlgB"/>
</dbReference>
<dbReference type="InterPro" id="IPR054169">
    <property type="entry name" value="GlgB_N"/>
</dbReference>
<dbReference type="InterPro" id="IPR044143">
    <property type="entry name" value="GlgB_N_E_set_prok"/>
</dbReference>
<dbReference type="InterPro" id="IPR006047">
    <property type="entry name" value="Glyco_hydro_13_cat_dom"/>
</dbReference>
<dbReference type="InterPro" id="IPR004193">
    <property type="entry name" value="Glyco_hydro_13_N"/>
</dbReference>
<dbReference type="InterPro" id="IPR013780">
    <property type="entry name" value="Glyco_hydro_b"/>
</dbReference>
<dbReference type="InterPro" id="IPR017853">
    <property type="entry name" value="Glycoside_hydrolase_SF"/>
</dbReference>
<dbReference type="InterPro" id="IPR013783">
    <property type="entry name" value="Ig-like_fold"/>
</dbReference>
<dbReference type="InterPro" id="IPR014756">
    <property type="entry name" value="Ig_E-set"/>
</dbReference>
<dbReference type="NCBIfam" id="TIGR01515">
    <property type="entry name" value="branching_enzym"/>
    <property type="match status" value="1"/>
</dbReference>
<dbReference type="NCBIfam" id="NF003811">
    <property type="entry name" value="PRK05402.1"/>
    <property type="match status" value="1"/>
</dbReference>
<dbReference type="NCBIfam" id="NF008967">
    <property type="entry name" value="PRK12313.1"/>
    <property type="match status" value="1"/>
</dbReference>
<dbReference type="PANTHER" id="PTHR43651">
    <property type="entry name" value="1,4-ALPHA-GLUCAN-BRANCHING ENZYME"/>
    <property type="match status" value="1"/>
</dbReference>
<dbReference type="PANTHER" id="PTHR43651:SF3">
    <property type="entry name" value="1,4-ALPHA-GLUCAN-BRANCHING ENZYME"/>
    <property type="match status" value="1"/>
</dbReference>
<dbReference type="Pfam" id="PF00128">
    <property type="entry name" value="Alpha-amylase"/>
    <property type="match status" value="1"/>
</dbReference>
<dbReference type="Pfam" id="PF02806">
    <property type="entry name" value="Alpha-amylase_C"/>
    <property type="match status" value="1"/>
</dbReference>
<dbReference type="Pfam" id="PF02922">
    <property type="entry name" value="CBM_48"/>
    <property type="match status" value="1"/>
</dbReference>
<dbReference type="Pfam" id="PF22019">
    <property type="entry name" value="GlgB_N"/>
    <property type="match status" value="1"/>
</dbReference>
<dbReference type="PIRSF" id="PIRSF000463">
    <property type="entry name" value="GlgB"/>
    <property type="match status" value="1"/>
</dbReference>
<dbReference type="SMART" id="SM00642">
    <property type="entry name" value="Aamy"/>
    <property type="match status" value="1"/>
</dbReference>
<dbReference type="SUPFAM" id="SSF51445">
    <property type="entry name" value="(Trans)glycosidases"/>
    <property type="match status" value="1"/>
</dbReference>
<dbReference type="SUPFAM" id="SSF81296">
    <property type="entry name" value="E set domains"/>
    <property type="match status" value="2"/>
</dbReference>
<dbReference type="SUPFAM" id="SSF51011">
    <property type="entry name" value="Glycosyl hydrolase domain"/>
    <property type="match status" value="1"/>
</dbReference>
<sequence length="812" mass="89229">MNNGDVNNGTARTGRLATGLAPDRPNPRGAATAVRNGGGRVALADRDASSASAQPGQTADDPAVPSAPPSAPPSALPADPPAVAPAVSVDLPYDDLERLVSGAHHDPHALLGAHPHPGSDATVVRVLRPDARAVTVLVGPARYPATRLHSGGVFGVAVPGMLPDYRIEVTYPDGPYLIDDPYRHLPTLGEMDLHLIIEGRHEQLWKVLGAHPRALTTPGGATVTGVSFAVWAPSARGVRLVGDFDFWDGRAFPMRSLGRSGIWELFVPGAGTGARYKYEILGFDGIWRQKADPLAFHTEVPPATASVVFASDFTWNDGAWLDRRARTAWRTEPVSVYEVHLGSWRRGLSYRELAEELTAYVVENGFTHVEMLPVAEHPFGGSWGYQVSAYYAPTARFGSPDEFRHLVDTLHRAGIGVIVDWVPAHFPRDTWALGRFDGTPLYEHPDPRRGEQPDWGTYVFDLGRPEVRNFLVANALYWFEEFHIDGLRVDAVASMLYLDYSRPEGGWLPNIHGGRENLDAVSFLQETNATVYRRFPGAMMIAEESTAWPGVTRPTHLGGLGFGFKWNMGWMHDTLDYNSRLPIHRMYHHHQMTFSMVYAYSENFILPFSHDEVVHGKGSLLRKMPGDRWAQLANLRALLAYMWAHPGKKLLFMGCEFAQDNEWNESASLEWPLLDDPAHAGVADLVRDLNGLYRTVPALYQHDADPAGFSWIDANDAENNVFSFLRWSGEDPAGGVLACVTNFAGIGHEGYRIGLPFPGRWREILNTDGYRYGGGNIGNLGSVQAVEEPHHGLDASATLTLPPLGAIWLSPA</sequence>
<name>GLGB_FRACC</name>
<organism>
    <name type="scientific">Frankia casuarinae (strain DSM 45818 / CECT 9043 / HFP020203 / CcI3)</name>
    <dbReference type="NCBI Taxonomy" id="106370"/>
    <lineage>
        <taxon>Bacteria</taxon>
        <taxon>Bacillati</taxon>
        <taxon>Actinomycetota</taxon>
        <taxon>Actinomycetes</taxon>
        <taxon>Frankiales</taxon>
        <taxon>Frankiaceae</taxon>
        <taxon>Frankia</taxon>
    </lineage>
</organism>
<evidence type="ECO:0000255" key="1">
    <source>
        <dbReference type="HAMAP-Rule" id="MF_00685"/>
    </source>
</evidence>
<evidence type="ECO:0000256" key="2">
    <source>
        <dbReference type="SAM" id="MobiDB-lite"/>
    </source>
</evidence>
<protein>
    <recommendedName>
        <fullName evidence="1">1,4-alpha-glucan branching enzyme GlgB</fullName>
        <ecNumber evidence="1">2.4.1.18</ecNumber>
    </recommendedName>
    <alternativeName>
        <fullName evidence="1">1,4-alpha-D-glucan:1,4-alpha-D-glucan 6-glucosyl-transferase</fullName>
    </alternativeName>
    <alternativeName>
        <fullName evidence="1">Alpha-(1-&gt;4)-glucan branching enzyme</fullName>
    </alternativeName>
    <alternativeName>
        <fullName evidence="1">Glycogen branching enzyme</fullName>
        <shortName evidence="1">BE</shortName>
    </alternativeName>
</protein>
<accession>Q2J6Q9</accession>
<feature type="chain" id="PRO_0000260658" description="1,4-alpha-glucan branching enzyme GlgB">
    <location>
        <begin position="1"/>
        <end position="812"/>
    </location>
</feature>
<feature type="region of interest" description="Disordered" evidence="2">
    <location>
        <begin position="1"/>
        <end position="83"/>
    </location>
</feature>
<feature type="compositionally biased region" description="Polar residues" evidence="2">
    <location>
        <begin position="1"/>
        <end position="11"/>
    </location>
</feature>
<feature type="compositionally biased region" description="Low complexity" evidence="2">
    <location>
        <begin position="49"/>
        <end position="64"/>
    </location>
</feature>
<feature type="compositionally biased region" description="Pro residues" evidence="2">
    <location>
        <begin position="65"/>
        <end position="83"/>
    </location>
</feature>
<feature type="active site" description="Nucleophile" evidence="1">
    <location>
        <position position="490"/>
    </location>
</feature>
<feature type="active site" description="Proton donor" evidence="1">
    <location>
        <position position="543"/>
    </location>
</feature>
<proteinExistence type="inferred from homology"/>